<gene>
    <name evidence="1" type="primary">guaA</name>
    <name type="ordered locus">Bfl527</name>
</gene>
<name>GUAA_BLOFL</name>
<comment type="function">
    <text evidence="1">Catalyzes the synthesis of GMP from XMP.</text>
</comment>
<comment type="catalytic activity">
    <reaction evidence="1">
        <text>XMP + L-glutamine + ATP + H2O = GMP + L-glutamate + AMP + diphosphate + 2 H(+)</text>
        <dbReference type="Rhea" id="RHEA:11680"/>
        <dbReference type="ChEBI" id="CHEBI:15377"/>
        <dbReference type="ChEBI" id="CHEBI:15378"/>
        <dbReference type="ChEBI" id="CHEBI:29985"/>
        <dbReference type="ChEBI" id="CHEBI:30616"/>
        <dbReference type="ChEBI" id="CHEBI:33019"/>
        <dbReference type="ChEBI" id="CHEBI:57464"/>
        <dbReference type="ChEBI" id="CHEBI:58115"/>
        <dbReference type="ChEBI" id="CHEBI:58359"/>
        <dbReference type="ChEBI" id="CHEBI:456215"/>
        <dbReference type="EC" id="6.3.5.2"/>
    </reaction>
</comment>
<comment type="pathway">
    <text evidence="1">Purine metabolism; GMP biosynthesis; GMP from XMP (L-Gln route): step 1/1.</text>
</comment>
<comment type="subunit">
    <text evidence="1">Homodimer.</text>
</comment>
<reference key="1">
    <citation type="journal article" date="2003" name="Proc. Natl. Acad. Sci. U.S.A.">
        <title>The genome sequence of Blochmannia floridanus: comparative analysis of reduced genomes.</title>
        <authorList>
            <person name="Gil R."/>
            <person name="Silva F.J."/>
            <person name="Zientz E."/>
            <person name="Delmotte F."/>
            <person name="Gonzalez-Candelas F."/>
            <person name="Latorre A."/>
            <person name="Rausell C."/>
            <person name="Kamerbeek J."/>
            <person name="Gadau J."/>
            <person name="Hoelldobler B."/>
            <person name="van Ham R.C.H.J."/>
            <person name="Gross R."/>
            <person name="Moya A."/>
        </authorList>
    </citation>
    <scope>NUCLEOTIDE SEQUENCE [LARGE SCALE GENOMIC DNA]</scope>
</reference>
<evidence type="ECO:0000255" key="1">
    <source>
        <dbReference type="HAMAP-Rule" id="MF_00344"/>
    </source>
</evidence>
<protein>
    <recommendedName>
        <fullName evidence="1">GMP synthase [glutamine-hydrolyzing]</fullName>
        <ecNumber evidence="1">6.3.5.2</ecNumber>
    </recommendedName>
    <alternativeName>
        <fullName evidence="1">GMP synthetase</fullName>
    </alternativeName>
    <alternativeName>
        <fullName evidence="1">Glutamine amidotransferase</fullName>
    </alternativeName>
</protein>
<keyword id="KW-0067">ATP-binding</keyword>
<keyword id="KW-0315">Glutamine amidotransferase</keyword>
<keyword id="KW-0332">GMP biosynthesis</keyword>
<keyword id="KW-0436">Ligase</keyword>
<keyword id="KW-0547">Nucleotide-binding</keyword>
<keyword id="KW-0658">Purine biosynthesis</keyword>
<keyword id="KW-1185">Reference proteome</keyword>
<accession>Q7VRS2</accession>
<feature type="chain" id="PRO_0000140106" description="GMP synthase [glutamine-hydrolyzing]">
    <location>
        <begin position="1"/>
        <end position="526"/>
    </location>
</feature>
<feature type="domain" description="Glutamine amidotransferase type-1" evidence="1">
    <location>
        <begin position="8"/>
        <end position="208"/>
    </location>
</feature>
<feature type="domain" description="GMPS ATP-PPase" evidence="1">
    <location>
        <begin position="209"/>
        <end position="401"/>
    </location>
</feature>
<feature type="active site" description="Nucleophile" evidence="1">
    <location>
        <position position="85"/>
    </location>
</feature>
<feature type="active site" evidence="1">
    <location>
        <position position="182"/>
    </location>
</feature>
<feature type="active site" evidence="1">
    <location>
        <position position="184"/>
    </location>
</feature>
<feature type="binding site" evidence="1">
    <location>
        <begin position="236"/>
        <end position="242"/>
    </location>
    <ligand>
        <name>ATP</name>
        <dbReference type="ChEBI" id="CHEBI:30616"/>
    </ligand>
</feature>
<proteinExistence type="inferred from homology"/>
<dbReference type="EC" id="6.3.5.2" evidence="1"/>
<dbReference type="EMBL" id="BX248583">
    <property type="protein sequence ID" value="CAD83213.1"/>
    <property type="molecule type" value="Genomic_DNA"/>
</dbReference>
<dbReference type="SMR" id="Q7VRS2"/>
<dbReference type="STRING" id="203907.Bfl527"/>
<dbReference type="KEGG" id="bfl:Bfl527"/>
<dbReference type="eggNOG" id="COG0519">
    <property type="taxonomic scope" value="Bacteria"/>
</dbReference>
<dbReference type="HOGENOM" id="CLU_014340_0_5_6"/>
<dbReference type="OrthoDB" id="9802219at2"/>
<dbReference type="UniPathway" id="UPA00189">
    <property type="reaction ID" value="UER00296"/>
</dbReference>
<dbReference type="Proteomes" id="UP000002192">
    <property type="component" value="Chromosome"/>
</dbReference>
<dbReference type="GO" id="GO:0005829">
    <property type="term" value="C:cytosol"/>
    <property type="evidence" value="ECO:0007669"/>
    <property type="project" value="TreeGrafter"/>
</dbReference>
<dbReference type="GO" id="GO:0005524">
    <property type="term" value="F:ATP binding"/>
    <property type="evidence" value="ECO:0007669"/>
    <property type="project" value="UniProtKB-UniRule"/>
</dbReference>
<dbReference type="GO" id="GO:0003921">
    <property type="term" value="F:GMP synthase activity"/>
    <property type="evidence" value="ECO:0007669"/>
    <property type="project" value="InterPro"/>
</dbReference>
<dbReference type="CDD" id="cd01742">
    <property type="entry name" value="GATase1_GMP_Synthase"/>
    <property type="match status" value="1"/>
</dbReference>
<dbReference type="CDD" id="cd01997">
    <property type="entry name" value="GMP_synthase_C"/>
    <property type="match status" value="1"/>
</dbReference>
<dbReference type="FunFam" id="3.30.300.10:FF:000002">
    <property type="entry name" value="GMP synthase [glutamine-hydrolyzing]"/>
    <property type="match status" value="1"/>
</dbReference>
<dbReference type="FunFam" id="3.40.50.880:FF:000001">
    <property type="entry name" value="GMP synthase [glutamine-hydrolyzing]"/>
    <property type="match status" value="1"/>
</dbReference>
<dbReference type="Gene3D" id="3.30.300.10">
    <property type="match status" value="1"/>
</dbReference>
<dbReference type="Gene3D" id="3.40.50.880">
    <property type="match status" value="1"/>
</dbReference>
<dbReference type="Gene3D" id="3.40.50.620">
    <property type="entry name" value="HUPs"/>
    <property type="match status" value="1"/>
</dbReference>
<dbReference type="HAMAP" id="MF_00344">
    <property type="entry name" value="GMP_synthase"/>
    <property type="match status" value="1"/>
</dbReference>
<dbReference type="InterPro" id="IPR029062">
    <property type="entry name" value="Class_I_gatase-like"/>
</dbReference>
<dbReference type="InterPro" id="IPR017926">
    <property type="entry name" value="GATASE"/>
</dbReference>
<dbReference type="InterPro" id="IPR001674">
    <property type="entry name" value="GMP_synth_C"/>
</dbReference>
<dbReference type="InterPro" id="IPR004739">
    <property type="entry name" value="GMP_synth_GATase"/>
</dbReference>
<dbReference type="InterPro" id="IPR022955">
    <property type="entry name" value="GMP_synthase"/>
</dbReference>
<dbReference type="InterPro" id="IPR025777">
    <property type="entry name" value="GMPS_ATP_PPase_dom"/>
</dbReference>
<dbReference type="InterPro" id="IPR022310">
    <property type="entry name" value="NAD/GMP_synthase"/>
</dbReference>
<dbReference type="InterPro" id="IPR014729">
    <property type="entry name" value="Rossmann-like_a/b/a_fold"/>
</dbReference>
<dbReference type="NCBIfam" id="TIGR00884">
    <property type="entry name" value="guaA_Cterm"/>
    <property type="match status" value="1"/>
</dbReference>
<dbReference type="NCBIfam" id="TIGR00888">
    <property type="entry name" value="guaA_Nterm"/>
    <property type="match status" value="1"/>
</dbReference>
<dbReference type="NCBIfam" id="NF000848">
    <property type="entry name" value="PRK00074.1"/>
    <property type="match status" value="1"/>
</dbReference>
<dbReference type="PANTHER" id="PTHR11922:SF2">
    <property type="entry name" value="GMP SYNTHASE [GLUTAMINE-HYDROLYZING]"/>
    <property type="match status" value="1"/>
</dbReference>
<dbReference type="PANTHER" id="PTHR11922">
    <property type="entry name" value="GMP SYNTHASE-RELATED"/>
    <property type="match status" value="1"/>
</dbReference>
<dbReference type="Pfam" id="PF00117">
    <property type="entry name" value="GATase"/>
    <property type="match status" value="1"/>
</dbReference>
<dbReference type="Pfam" id="PF00958">
    <property type="entry name" value="GMP_synt_C"/>
    <property type="match status" value="1"/>
</dbReference>
<dbReference type="Pfam" id="PF02540">
    <property type="entry name" value="NAD_synthase"/>
    <property type="match status" value="1"/>
</dbReference>
<dbReference type="PRINTS" id="PR00097">
    <property type="entry name" value="ANTSNTHASEII"/>
</dbReference>
<dbReference type="PRINTS" id="PR00099">
    <property type="entry name" value="CPSGATASE"/>
</dbReference>
<dbReference type="PRINTS" id="PR00096">
    <property type="entry name" value="GATASE"/>
</dbReference>
<dbReference type="SUPFAM" id="SSF52402">
    <property type="entry name" value="Adenine nucleotide alpha hydrolases-like"/>
    <property type="match status" value="1"/>
</dbReference>
<dbReference type="SUPFAM" id="SSF52317">
    <property type="entry name" value="Class I glutamine amidotransferase-like"/>
    <property type="match status" value="1"/>
</dbReference>
<dbReference type="SUPFAM" id="SSF54810">
    <property type="entry name" value="GMP synthetase C-terminal dimerisation domain"/>
    <property type="match status" value="1"/>
</dbReference>
<dbReference type="PROSITE" id="PS51273">
    <property type="entry name" value="GATASE_TYPE_1"/>
    <property type="match status" value="1"/>
</dbReference>
<dbReference type="PROSITE" id="PS51553">
    <property type="entry name" value="GMPS_ATP_PPASE"/>
    <property type="match status" value="1"/>
</dbReference>
<organism>
    <name type="scientific">Blochmanniella floridana</name>
    <dbReference type="NCBI Taxonomy" id="203907"/>
    <lineage>
        <taxon>Bacteria</taxon>
        <taxon>Pseudomonadati</taxon>
        <taxon>Pseudomonadota</taxon>
        <taxon>Gammaproteobacteria</taxon>
        <taxon>Enterobacterales</taxon>
        <taxon>Enterobacteriaceae</taxon>
        <taxon>ant endosymbionts</taxon>
        <taxon>Candidatus Blochmanniella</taxon>
    </lineage>
</organism>
<sequence length="526" mass="59678">MKQCTRQCILIIDFGSQYTQLLLRRIRELGIYAKVCDWNISQDLLVSLNPNGIIFSGGPDSVTNKHSSSISKVVFKIGVPILGICYGMQILVSQCGGNIRSVSNKGEFGYAQVEILSQKNTLIGNLYDYINDQGHCVLEVWMSHKDIVETMPQGFTVIGITENQQIAIIINEKCRWYGIQFHPEVTHTKKGKDILKRFAVDICRCEVTWKPVYIVKNIIKTIKKVVGQDRVVLAFSGGIDSLVTALLLKYAINHEQFVCVFVNNGLLCCNEINRISNFCKKYQDLNIIHLSEEKRFLSALTGVIDPEEKRKIIGKIFVEIFQAQISQLKNIKWLAQGTIYSDVIESGMSCASANIIKSHHNVGGFPSSVNIQLLEPIKDLFKDEVRNIGLYLGLPLNVVNQYPCPGPGMAIRILGEVREEYCNILRRVDYIFMEELNKSDLYNTVDQAFAVFLPVQSVGVQGDQRKYKWVIVLRAIETEDFMTAQWVRLPYTFLNKVSNRIVNEVEEVSRVVYDISCKPPATIEWE</sequence>